<proteinExistence type="inferred from homology"/>
<name>ARGB_ACIAD</name>
<organism>
    <name type="scientific">Acinetobacter baylyi (strain ATCC 33305 / BD413 / ADP1)</name>
    <dbReference type="NCBI Taxonomy" id="62977"/>
    <lineage>
        <taxon>Bacteria</taxon>
        <taxon>Pseudomonadati</taxon>
        <taxon>Pseudomonadota</taxon>
        <taxon>Gammaproteobacteria</taxon>
        <taxon>Moraxellales</taxon>
        <taxon>Moraxellaceae</taxon>
        <taxon>Acinetobacter</taxon>
    </lineage>
</organism>
<dbReference type="EC" id="2.7.2.8" evidence="1"/>
<dbReference type="EMBL" id="CR543861">
    <property type="protein sequence ID" value="CAG67800.1"/>
    <property type="molecule type" value="Genomic_DNA"/>
</dbReference>
<dbReference type="RefSeq" id="WP_004922071.1">
    <property type="nucleotide sequence ID" value="NC_005966.1"/>
</dbReference>
<dbReference type="SMR" id="Q6FDQ8"/>
<dbReference type="STRING" id="202950.GCA_001485005_02650"/>
<dbReference type="GeneID" id="45233362"/>
<dbReference type="KEGG" id="aci:ACIAD0903"/>
<dbReference type="eggNOG" id="COG0548">
    <property type="taxonomic scope" value="Bacteria"/>
</dbReference>
<dbReference type="HOGENOM" id="CLU_053680_0_0_6"/>
<dbReference type="OrthoDB" id="9803155at2"/>
<dbReference type="BioCyc" id="ASP62977:ACIAD_RS04170-MONOMER"/>
<dbReference type="UniPathway" id="UPA00068">
    <property type="reaction ID" value="UER00107"/>
</dbReference>
<dbReference type="Proteomes" id="UP000000430">
    <property type="component" value="Chromosome"/>
</dbReference>
<dbReference type="GO" id="GO:0005737">
    <property type="term" value="C:cytoplasm"/>
    <property type="evidence" value="ECO:0007669"/>
    <property type="project" value="UniProtKB-SubCell"/>
</dbReference>
<dbReference type="GO" id="GO:0003991">
    <property type="term" value="F:acetylglutamate kinase activity"/>
    <property type="evidence" value="ECO:0007669"/>
    <property type="project" value="UniProtKB-UniRule"/>
</dbReference>
<dbReference type="GO" id="GO:0005524">
    <property type="term" value="F:ATP binding"/>
    <property type="evidence" value="ECO:0007669"/>
    <property type="project" value="UniProtKB-UniRule"/>
</dbReference>
<dbReference type="GO" id="GO:0042450">
    <property type="term" value="P:arginine biosynthetic process via ornithine"/>
    <property type="evidence" value="ECO:0007669"/>
    <property type="project" value="UniProtKB-UniRule"/>
</dbReference>
<dbReference type="GO" id="GO:0006526">
    <property type="term" value="P:L-arginine biosynthetic process"/>
    <property type="evidence" value="ECO:0007669"/>
    <property type="project" value="UniProtKB-UniPathway"/>
</dbReference>
<dbReference type="CDD" id="cd04250">
    <property type="entry name" value="AAK_NAGK-C"/>
    <property type="match status" value="1"/>
</dbReference>
<dbReference type="FunFam" id="3.40.1160.10:FF:000004">
    <property type="entry name" value="Acetylglutamate kinase"/>
    <property type="match status" value="1"/>
</dbReference>
<dbReference type="Gene3D" id="3.40.1160.10">
    <property type="entry name" value="Acetylglutamate kinase-like"/>
    <property type="match status" value="1"/>
</dbReference>
<dbReference type="HAMAP" id="MF_00082">
    <property type="entry name" value="ArgB"/>
    <property type="match status" value="1"/>
</dbReference>
<dbReference type="InterPro" id="IPR036393">
    <property type="entry name" value="AceGlu_kinase-like_sf"/>
</dbReference>
<dbReference type="InterPro" id="IPR004662">
    <property type="entry name" value="AcgluKinase_fam"/>
</dbReference>
<dbReference type="InterPro" id="IPR037528">
    <property type="entry name" value="ArgB"/>
</dbReference>
<dbReference type="InterPro" id="IPR001048">
    <property type="entry name" value="Asp/Glu/Uridylate_kinase"/>
</dbReference>
<dbReference type="InterPro" id="IPR041727">
    <property type="entry name" value="NAGK-C"/>
</dbReference>
<dbReference type="NCBIfam" id="TIGR00761">
    <property type="entry name" value="argB"/>
    <property type="match status" value="1"/>
</dbReference>
<dbReference type="PANTHER" id="PTHR23342">
    <property type="entry name" value="N-ACETYLGLUTAMATE SYNTHASE"/>
    <property type="match status" value="1"/>
</dbReference>
<dbReference type="PANTHER" id="PTHR23342:SF0">
    <property type="entry name" value="N-ACETYLGLUTAMATE SYNTHASE, MITOCHONDRIAL"/>
    <property type="match status" value="1"/>
</dbReference>
<dbReference type="Pfam" id="PF00696">
    <property type="entry name" value="AA_kinase"/>
    <property type="match status" value="1"/>
</dbReference>
<dbReference type="PIRSF" id="PIRSF000728">
    <property type="entry name" value="NAGK"/>
    <property type="match status" value="1"/>
</dbReference>
<dbReference type="SUPFAM" id="SSF53633">
    <property type="entry name" value="Carbamate kinase-like"/>
    <property type="match status" value="1"/>
</dbReference>
<gene>
    <name evidence="1" type="primary">argB</name>
    <name type="ordered locus">ACIAD0903</name>
</gene>
<comment type="function">
    <text evidence="1">Catalyzes the ATP-dependent phosphorylation of N-acetyl-L-glutamate.</text>
</comment>
<comment type="catalytic activity">
    <reaction evidence="1">
        <text>N-acetyl-L-glutamate + ATP = N-acetyl-L-glutamyl 5-phosphate + ADP</text>
        <dbReference type="Rhea" id="RHEA:14629"/>
        <dbReference type="ChEBI" id="CHEBI:30616"/>
        <dbReference type="ChEBI" id="CHEBI:44337"/>
        <dbReference type="ChEBI" id="CHEBI:57936"/>
        <dbReference type="ChEBI" id="CHEBI:456216"/>
        <dbReference type="EC" id="2.7.2.8"/>
    </reaction>
</comment>
<comment type="pathway">
    <text evidence="1">Amino-acid biosynthesis; L-arginine biosynthesis; N(2)-acetyl-L-ornithine from L-glutamate: step 2/4.</text>
</comment>
<comment type="subcellular location">
    <subcellularLocation>
        <location evidence="1">Cytoplasm</location>
    </subcellularLocation>
</comment>
<comment type="similarity">
    <text evidence="1">Belongs to the acetylglutamate kinase family. ArgB subfamily.</text>
</comment>
<sequence>MPHQHKGIDKAKILTEALPYIQRFSGKTLVVKYGGNAMTDPELESSFARDIVLLKTVGLNPIVVHGGGPQVDSLLKRLGQVSDRIDGMRVTDEATMEVVEMVLGGSVNKSIVNLINQHGGRAIGLTGKDGNLIRARKLLMEKHDEQGDIKHIDLGLVGEVVGIKTDVLEMFTQSDFIPVIAPLGVDESGNTYNINADLVAGKVAEALGAEKLILLTNISGVLDENKNLLTGLSTQEVDRLIATGVIYGGMIPKVGCALDAVKGGVVSAHIVDGRVPHATLLEIFTDHGVGTLITNRLHAKSEH</sequence>
<keyword id="KW-0028">Amino-acid biosynthesis</keyword>
<keyword id="KW-0055">Arginine biosynthesis</keyword>
<keyword id="KW-0067">ATP-binding</keyword>
<keyword id="KW-0963">Cytoplasm</keyword>
<keyword id="KW-0418">Kinase</keyword>
<keyword id="KW-0547">Nucleotide-binding</keyword>
<keyword id="KW-0808">Transferase</keyword>
<evidence type="ECO:0000255" key="1">
    <source>
        <dbReference type="HAMAP-Rule" id="MF_00082"/>
    </source>
</evidence>
<protein>
    <recommendedName>
        <fullName evidence="1">Acetylglutamate kinase</fullName>
        <ecNumber evidence="1">2.7.2.8</ecNumber>
    </recommendedName>
    <alternativeName>
        <fullName evidence="1">N-acetyl-L-glutamate 5-phosphotransferase</fullName>
    </alternativeName>
    <alternativeName>
        <fullName evidence="1">NAG kinase</fullName>
        <shortName evidence="1">NAGK</shortName>
    </alternativeName>
</protein>
<accession>Q6FDQ8</accession>
<feature type="chain" id="PRO_0000112572" description="Acetylglutamate kinase">
    <location>
        <begin position="1"/>
        <end position="303"/>
    </location>
</feature>
<feature type="binding site" evidence="1">
    <location>
        <begin position="67"/>
        <end position="68"/>
    </location>
    <ligand>
        <name>substrate</name>
    </ligand>
</feature>
<feature type="binding site" evidence="1">
    <location>
        <position position="89"/>
    </location>
    <ligand>
        <name>substrate</name>
    </ligand>
</feature>
<feature type="binding site" evidence="1">
    <location>
        <position position="193"/>
    </location>
    <ligand>
        <name>substrate</name>
    </ligand>
</feature>
<feature type="site" description="Transition state stabilizer" evidence="1">
    <location>
        <position position="32"/>
    </location>
</feature>
<feature type="site" description="Transition state stabilizer" evidence="1">
    <location>
        <position position="253"/>
    </location>
</feature>
<reference key="1">
    <citation type="journal article" date="2004" name="Nucleic Acids Res.">
        <title>Unique features revealed by the genome sequence of Acinetobacter sp. ADP1, a versatile and naturally transformation competent bacterium.</title>
        <authorList>
            <person name="Barbe V."/>
            <person name="Vallenet D."/>
            <person name="Fonknechten N."/>
            <person name="Kreimeyer A."/>
            <person name="Oztas S."/>
            <person name="Labarre L."/>
            <person name="Cruveiller S."/>
            <person name="Robert C."/>
            <person name="Duprat S."/>
            <person name="Wincker P."/>
            <person name="Ornston L.N."/>
            <person name="Weissenbach J."/>
            <person name="Marliere P."/>
            <person name="Cohen G.N."/>
            <person name="Medigue C."/>
        </authorList>
    </citation>
    <scope>NUCLEOTIDE SEQUENCE [LARGE SCALE GENOMIC DNA]</scope>
    <source>
        <strain>ATCC 33305 / BD413 / ADP1</strain>
    </source>
</reference>